<dbReference type="EC" id="2.7.2.1" evidence="1"/>
<dbReference type="EMBL" id="CP000359">
    <property type="protein sequence ID" value="ABF44355.1"/>
    <property type="molecule type" value="Genomic_DNA"/>
</dbReference>
<dbReference type="RefSeq" id="WP_011529202.1">
    <property type="nucleotide sequence ID" value="NC_008025.1"/>
</dbReference>
<dbReference type="SMR" id="Q1J2C9"/>
<dbReference type="STRING" id="319795.Dgeo_0052"/>
<dbReference type="KEGG" id="dge:Dgeo_0052"/>
<dbReference type="eggNOG" id="COG0282">
    <property type="taxonomic scope" value="Bacteria"/>
</dbReference>
<dbReference type="HOGENOM" id="CLU_020352_0_1_0"/>
<dbReference type="UniPathway" id="UPA00340">
    <property type="reaction ID" value="UER00458"/>
</dbReference>
<dbReference type="Proteomes" id="UP000002431">
    <property type="component" value="Chromosome"/>
</dbReference>
<dbReference type="GO" id="GO:0005829">
    <property type="term" value="C:cytosol"/>
    <property type="evidence" value="ECO:0007669"/>
    <property type="project" value="TreeGrafter"/>
</dbReference>
<dbReference type="GO" id="GO:0008776">
    <property type="term" value="F:acetate kinase activity"/>
    <property type="evidence" value="ECO:0007669"/>
    <property type="project" value="UniProtKB-UniRule"/>
</dbReference>
<dbReference type="GO" id="GO:0005524">
    <property type="term" value="F:ATP binding"/>
    <property type="evidence" value="ECO:0007669"/>
    <property type="project" value="UniProtKB-KW"/>
</dbReference>
<dbReference type="GO" id="GO:0000287">
    <property type="term" value="F:magnesium ion binding"/>
    <property type="evidence" value="ECO:0007669"/>
    <property type="project" value="UniProtKB-UniRule"/>
</dbReference>
<dbReference type="GO" id="GO:0006083">
    <property type="term" value="P:acetate metabolic process"/>
    <property type="evidence" value="ECO:0007669"/>
    <property type="project" value="TreeGrafter"/>
</dbReference>
<dbReference type="GO" id="GO:0006085">
    <property type="term" value="P:acetyl-CoA biosynthetic process"/>
    <property type="evidence" value="ECO:0007669"/>
    <property type="project" value="UniProtKB-UniRule"/>
</dbReference>
<dbReference type="CDD" id="cd24010">
    <property type="entry name" value="ASKHA_NBD_AcK_PK"/>
    <property type="match status" value="1"/>
</dbReference>
<dbReference type="Gene3D" id="3.30.420.40">
    <property type="match status" value="2"/>
</dbReference>
<dbReference type="HAMAP" id="MF_00020">
    <property type="entry name" value="Acetate_kinase"/>
    <property type="match status" value="1"/>
</dbReference>
<dbReference type="InterPro" id="IPR004372">
    <property type="entry name" value="Ac/propionate_kinase"/>
</dbReference>
<dbReference type="InterPro" id="IPR000890">
    <property type="entry name" value="Aliphatic_acid_kin_short-chain"/>
</dbReference>
<dbReference type="InterPro" id="IPR023865">
    <property type="entry name" value="Aliphatic_acid_kinase_CS"/>
</dbReference>
<dbReference type="InterPro" id="IPR043129">
    <property type="entry name" value="ATPase_NBD"/>
</dbReference>
<dbReference type="NCBIfam" id="TIGR00016">
    <property type="entry name" value="ackA"/>
    <property type="match status" value="1"/>
</dbReference>
<dbReference type="PANTHER" id="PTHR21060">
    <property type="entry name" value="ACETATE KINASE"/>
    <property type="match status" value="1"/>
</dbReference>
<dbReference type="PANTHER" id="PTHR21060:SF21">
    <property type="entry name" value="ACETATE KINASE"/>
    <property type="match status" value="1"/>
</dbReference>
<dbReference type="Pfam" id="PF00871">
    <property type="entry name" value="Acetate_kinase"/>
    <property type="match status" value="1"/>
</dbReference>
<dbReference type="PIRSF" id="PIRSF000722">
    <property type="entry name" value="Acetate_prop_kin"/>
    <property type="match status" value="1"/>
</dbReference>
<dbReference type="PRINTS" id="PR00471">
    <property type="entry name" value="ACETATEKNASE"/>
</dbReference>
<dbReference type="SUPFAM" id="SSF53067">
    <property type="entry name" value="Actin-like ATPase domain"/>
    <property type="match status" value="2"/>
</dbReference>
<dbReference type="PROSITE" id="PS01075">
    <property type="entry name" value="ACETATE_KINASE_1"/>
    <property type="match status" value="1"/>
</dbReference>
<dbReference type="PROSITE" id="PS01076">
    <property type="entry name" value="ACETATE_KINASE_2"/>
    <property type="match status" value="1"/>
</dbReference>
<comment type="function">
    <text evidence="1">Catalyzes the formation of acetyl phosphate from acetate and ATP. Can also catalyze the reverse reaction.</text>
</comment>
<comment type="catalytic activity">
    <reaction evidence="1">
        <text>acetate + ATP = acetyl phosphate + ADP</text>
        <dbReference type="Rhea" id="RHEA:11352"/>
        <dbReference type="ChEBI" id="CHEBI:22191"/>
        <dbReference type="ChEBI" id="CHEBI:30089"/>
        <dbReference type="ChEBI" id="CHEBI:30616"/>
        <dbReference type="ChEBI" id="CHEBI:456216"/>
        <dbReference type="EC" id="2.7.2.1"/>
    </reaction>
</comment>
<comment type="cofactor">
    <cofactor evidence="1">
        <name>Mg(2+)</name>
        <dbReference type="ChEBI" id="CHEBI:18420"/>
    </cofactor>
    <cofactor evidence="1">
        <name>Mn(2+)</name>
        <dbReference type="ChEBI" id="CHEBI:29035"/>
    </cofactor>
    <text evidence="1">Mg(2+). Can also accept Mn(2+).</text>
</comment>
<comment type="pathway">
    <text evidence="1">Metabolic intermediate biosynthesis; acetyl-CoA biosynthesis; acetyl-CoA from acetate: step 1/2.</text>
</comment>
<comment type="subunit">
    <text evidence="1">Homodimer.</text>
</comment>
<comment type="subcellular location">
    <subcellularLocation>
        <location evidence="1">Cytoplasm</location>
    </subcellularLocation>
</comment>
<comment type="similarity">
    <text evidence="1">Belongs to the acetokinase family.</text>
</comment>
<proteinExistence type="inferred from homology"/>
<reference key="1">
    <citation type="submission" date="2006-04" db="EMBL/GenBank/DDBJ databases">
        <title>Complete sequence of chromosome of Deinococcus geothermalis DSM 11300.</title>
        <authorList>
            <person name="Copeland A."/>
            <person name="Lucas S."/>
            <person name="Lapidus A."/>
            <person name="Barry K."/>
            <person name="Detter J.C."/>
            <person name="Glavina del Rio T."/>
            <person name="Hammon N."/>
            <person name="Israni S."/>
            <person name="Dalin E."/>
            <person name="Tice H."/>
            <person name="Pitluck S."/>
            <person name="Brettin T."/>
            <person name="Bruce D."/>
            <person name="Han C."/>
            <person name="Tapia R."/>
            <person name="Saunders E."/>
            <person name="Gilna P."/>
            <person name="Schmutz J."/>
            <person name="Larimer F."/>
            <person name="Land M."/>
            <person name="Hauser L."/>
            <person name="Kyrpides N."/>
            <person name="Kim E."/>
            <person name="Daly M.J."/>
            <person name="Fredrickson J.K."/>
            <person name="Makarova K.S."/>
            <person name="Gaidamakova E.K."/>
            <person name="Zhai M."/>
            <person name="Richardson P."/>
        </authorList>
    </citation>
    <scope>NUCLEOTIDE SEQUENCE [LARGE SCALE GENOMIC DNA]</scope>
    <source>
        <strain>DSM 11300 / CIP 105573 / AG-3a</strain>
    </source>
</reference>
<feature type="chain" id="PRO_1000002227" description="Acetate kinase">
    <location>
        <begin position="1"/>
        <end position="395"/>
    </location>
</feature>
<feature type="active site" description="Proton donor/acceptor" evidence="1">
    <location>
        <position position="142"/>
    </location>
</feature>
<feature type="binding site" evidence="1">
    <location>
        <position position="7"/>
    </location>
    <ligand>
        <name>Mg(2+)</name>
        <dbReference type="ChEBI" id="CHEBI:18420"/>
    </ligand>
</feature>
<feature type="binding site" evidence="1">
    <location>
        <position position="14"/>
    </location>
    <ligand>
        <name>ATP</name>
        <dbReference type="ChEBI" id="CHEBI:30616"/>
    </ligand>
</feature>
<feature type="binding site" evidence="1">
    <location>
        <position position="85"/>
    </location>
    <ligand>
        <name>substrate</name>
    </ligand>
</feature>
<feature type="binding site" evidence="1">
    <location>
        <begin position="202"/>
        <end position="206"/>
    </location>
    <ligand>
        <name>ATP</name>
        <dbReference type="ChEBI" id="CHEBI:30616"/>
    </ligand>
</feature>
<feature type="binding site" evidence="1">
    <location>
        <begin position="277"/>
        <end position="279"/>
    </location>
    <ligand>
        <name>ATP</name>
        <dbReference type="ChEBI" id="CHEBI:30616"/>
    </ligand>
</feature>
<feature type="binding site" evidence="1">
    <location>
        <begin position="325"/>
        <end position="329"/>
    </location>
    <ligand>
        <name>ATP</name>
        <dbReference type="ChEBI" id="CHEBI:30616"/>
    </ligand>
</feature>
<feature type="binding site" evidence="1">
    <location>
        <position position="378"/>
    </location>
    <ligand>
        <name>Mg(2+)</name>
        <dbReference type="ChEBI" id="CHEBI:18420"/>
    </ligand>
</feature>
<feature type="site" description="Transition state stabilizer" evidence="1">
    <location>
        <position position="174"/>
    </location>
</feature>
<feature type="site" description="Transition state stabilizer" evidence="1">
    <location>
        <position position="235"/>
    </location>
</feature>
<keyword id="KW-0067">ATP-binding</keyword>
<keyword id="KW-0963">Cytoplasm</keyword>
<keyword id="KW-0418">Kinase</keyword>
<keyword id="KW-0460">Magnesium</keyword>
<keyword id="KW-0479">Metal-binding</keyword>
<keyword id="KW-0547">Nucleotide-binding</keyword>
<keyword id="KW-0808">Transferase</keyword>
<organism>
    <name type="scientific">Deinococcus geothermalis (strain DSM 11300 / CIP 105573 / AG-3a)</name>
    <dbReference type="NCBI Taxonomy" id="319795"/>
    <lineage>
        <taxon>Bacteria</taxon>
        <taxon>Thermotogati</taxon>
        <taxon>Deinococcota</taxon>
        <taxon>Deinococci</taxon>
        <taxon>Deinococcales</taxon>
        <taxon>Deinococcaceae</taxon>
        <taxon>Deinococcus</taxon>
    </lineage>
</organism>
<sequence>MWTLVVNCGSSSLKFALLNPATGETPLTGLAERLGSDLAAVRVDRGEERGTVPLPQGSYSEAFGVLLAELDALGLRQEVRAVGHRVVHGGDRFNAPVRITPEVLEVIRTCIPLAPLHNPANLAGIEAALAAFPELPQVAVFDTAFHQSMPPVAYRYAVPTVWYTCYGVRRYGFHGISHAYVAEEAARLLARDLTDLSLVTAHLGNGCSVTAVQGGRSLDTSMGLTPLEGLVMGTRSGDVDPGLPDYLAREAGLTLAEITAALNRESGLLGLSGLTNDMRELEAAAAGGNTNAQLALEIFVYRLAKTIAGMATVLGRLDALVFTGGIGENSATVRAATLARLGLLGFQLDAAANAQAVRGQGGVITSGGVPALVVNTNEERMIARETARAVKGAPA</sequence>
<protein>
    <recommendedName>
        <fullName evidence="1">Acetate kinase</fullName>
        <ecNumber evidence="1">2.7.2.1</ecNumber>
    </recommendedName>
    <alternativeName>
        <fullName evidence="1">Acetokinase</fullName>
    </alternativeName>
</protein>
<gene>
    <name evidence="1" type="primary">ackA</name>
    <name type="ordered locus">Dgeo_0052</name>
</gene>
<accession>Q1J2C9</accession>
<name>ACKA_DEIGD</name>
<evidence type="ECO:0000255" key="1">
    <source>
        <dbReference type="HAMAP-Rule" id="MF_00020"/>
    </source>
</evidence>